<proteinExistence type="inferred from homology"/>
<evidence type="ECO:0000255" key="1">
    <source>
        <dbReference type="HAMAP-Rule" id="MF_00161"/>
    </source>
</evidence>
<evidence type="ECO:0000305" key="2"/>
<accession>Q88Q91</accession>
<protein>
    <recommendedName>
        <fullName evidence="1">Lipoprotein signal peptidase</fullName>
        <ecNumber evidence="1">3.4.23.36</ecNumber>
    </recommendedName>
    <alternativeName>
        <fullName evidence="1">Prolipoprotein signal peptidase</fullName>
    </alternativeName>
    <alternativeName>
        <fullName evidence="1">Signal peptidase II</fullName>
        <shortName evidence="1">SPase II</shortName>
    </alternativeName>
</protein>
<reference key="1">
    <citation type="journal article" date="2002" name="Environ. Microbiol.">
        <title>Complete genome sequence and comparative analysis of the metabolically versatile Pseudomonas putida KT2440.</title>
        <authorList>
            <person name="Nelson K.E."/>
            <person name="Weinel C."/>
            <person name="Paulsen I.T."/>
            <person name="Dodson R.J."/>
            <person name="Hilbert H."/>
            <person name="Martins dos Santos V.A.P."/>
            <person name="Fouts D.E."/>
            <person name="Gill S.R."/>
            <person name="Pop M."/>
            <person name="Holmes M."/>
            <person name="Brinkac L.M."/>
            <person name="Beanan M.J."/>
            <person name="DeBoy R.T."/>
            <person name="Daugherty S.C."/>
            <person name="Kolonay J.F."/>
            <person name="Madupu R."/>
            <person name="Nelson W.C."/>
            <person name="White O."/>
            <person name="Peterson J.D."/>
            <person name="Khouri H.M."/>
            <person name="Hance I."/>
            <person name="Chris Lee P."/>
            <person name="Holtzapple E.K."/>
            <person name="Scanlan D."/>
            <person name="Tran K."/>
            <person name="Moazzez A."/>
            <person name="Utterback T.R."/>
            <person name="Rizzo M."/>
            <person name="Lee K."/>
            <person name="Kosack D."/>
            <person name="Moestl D."/>
            <person name="Wedler H."/>
            <person name="Lauber J."/>
            <person name="Stjepandic D."/>
            <person name="Hoheisel J."/>
            <person name="Straetz M."/>
            <person name="Heim S."/>
            <person name="Kiewitz C."/>
            <person name="Eisen J.A."/>
            <person name="Timmis K.N."/>
            <person name="Duesterhoeft A."/>
            <person name="Tuemmler B."/>
            <person name="Fraser C.M."/>
        </authorList>
    </citation>
    <scope>NUCLEOTIDE SEQUENCE [LARGE SCALE GENOMIC DNA]</scope>
    <source>
        <strain>ATCC 47054 / DSM 6125 / CFBP 8728 / NCIMB 11950 / KT2440</strain>
    </source>
</reference>
<keyword id="KW-0064">Aspartyl protease</keyword>
<keyword id="KW-0997">Cell inner membrane</keyword>
<keyword id="KW-1003">Cell membrane</keyword>
<keyword id="KW-0378">Hydrolase</keyword>
<keyword id="KW-0472">Membrane</keyword>
<keyword id="KW-0645">Protease</keyword>
<keyword id="KW-1185">Reference proteome</keyword>
<keyword id="KW-0812">Transmembrane</keyword>
<keyword id="KW-1133">Transmembrane helix</keyword>
<name>LSPA_PSEPK</name>
<organism>
    <name type="scientific">Pseudomonas putida (strain ATCC 47054 / DSM 6125 / CFBP 8728 / NCIMB 11950 / KT2440)</name>
    <dbReference type="NCBI Taxonomy" id="160488"/>
    <lineage>
        <taxon>Bacteria</taxon>
        <taxon>Pseudomonadati</taxon>
        <taxon>Pseudomonadota</taxon>
        <taxon>Gammaproteobacteria</taxon>
        <taxon>Pseudomonadales</taxon>
        <taxon>Pseudomonadaceae</taxon>
        <taxon>Pseudomonas</taxon>
    </lineage>
</organism>
<feature type="chain" id="PRO_0000178804" description="Lipoprotein signal peptidase">
    <location>
        <begin position="1"/>
        <end position="171"/>
    </location>
</feature>
<feature type="transmembrane region" description="Helical" evidence="1">
    <location>
        <begin position="12"/>
        <end position="32"/>
    </location>
</feature>
<feature type="transmembrane region" description="Helical" evidence="1">
    <location>
        <begin position="42"/>
        <end position="62"/>
    </location>
</feature>
<feature type="transmembrane region" description="Helical" evidence="1">
    <location>
        <begin position="70"/>
        <end position="90"/>
    </location>
</feature>
<feature type="transmembrane region" description="Helical" evidence="1">
    <location>
        <begin position="96"/>
        <end position="116"/>
    </location>
</feature>
<feature type="transmembrane region" description="Helical" evidence="1">
    <location>
        <begin position="137"/>
        <end position="157"/>
    </location>
</feature>
<feature type="active site" evidence="1">
    <location>
        <position position="126"/>
    </location>
</feature>
<feature type="active site" evidence="1">
    <location>
        <position position="145"/>
    </location>
</feature>
<gene>
    <name evidence="1" type="primary">lspA</name>
    <name type="ordered locus">PP_0604</name>
</gene>
<sequence>MPNPAAGRFGRLAWLWLSLLVLVIDQATKLYFNNALTMYQQIVVIPDYFSWTLAYNTGAAFSFLADGAGWQRWLFALIAVVVSAVLVVWLKRLGRNETWLAVALALVLGGAIGNLYDRIVLGHVVDFILVHWQNRHYFPAFNVADSAITVGAVMLALDMFKSKKSEDPVHD</sequence>
<dbReference type="EC" id="3.4.23.36" evidence="1"/>
<dbReference type="EMBL" id="AE015451">
    <property type="protein sequence ID" value="AAN66230.1"/>
    <property type="status" value="ALT_INIT"/>
    <property type="molecule type" value="Genomic_DNA"/>
</dbReference>
<dbReference type="RefSeq" id="NP_742766.1">
    <property type="nucleotide sequence ID" value="NC_002947.4"/>
</dbReference>
<dbReference type="RefSeq" id="WP_003247609.1">
    <property type="nucleotide sequence ID" value="NZ_CP169744.1"/>
</dbReference>
<dbReference type="SMR" id="Q88Q91"/>
<dbReference type="STRING" id="160488.PP_0604"/>
<dbReference type="PaxDb" id="160488-PP_0604"/>
<dbReference type="GeneID" id="83677935"/>
<dbReference type="KEGG" id="ppu:PP_0604"/>
<dbReference type="PATRIC" id="fig|160488.4.peg.644"/>
<dbReference type="eggNOG" id="COG0597">
    <property type="taxonomic scope" value="Bacteria"/>
</dbReference>
<dbReference type="HOGENOM" id="CLU_083252_4_0_6"/>
<dbReference type="OrthoDB" id="9810259at2"/>
<dbReference type="PhylomeDB" id="Q88Q91"/>
<dbReference type="UniPathway" id="UPA00665"/>
<dbReference type="Proteomes" id="UP000000556">
    <property type="component" value="Chromosome"/>
</dbReference>
<dbReference type="GO" id="GO:0005886">
    <property type="term" value="C:plasma membrane"/>
    <property type="evidence" value="ECO:0007669"/>
    <property type="project" value="UniProtKB-SubCell"/>
</dbReference>
<dbReference type="GO" id="GO:0004190">
    <property type="term" value="F:aspartic-type endopeptidase activity"/>
    <property type="evidence" value="ECO:0007669"/>
    <property type="project" value="UniProtKB-UniRule"/>
</dbReference>
<dbReference type="GO" id="GO:0006508">
    <property type="term" value="P:proteolysis"/>
    <property type="evidence" value="ECO:0007669"/>
    <property type="project" value="UniProtKB-KW"/>
</dbReference>
<dbReference type="HAMAP" id="MF_00161">
    <property type="entry name" value="LspA"/>
    <property type="match status" value="1"/>
</dbReference>
<dbReference type="InterPro" id="IPR001872">
    <property type="entry name" value="Peptidase_A8"/>
</dbReference>
<dbReference type="NCBIfam" id="TIGR00077">
    <property type="entry name" value="lspA"/>
    <property type="match status" value="1"/>
</dbReference>
<dbReference type="PANTHER" id="PTHR33695">
    <property type="entry name" value="LIPOPROTEIN SIGNAL PEPTIDASE"/>
    <property type="match status" value="1"/>
</dbReference>
<dbReference type="PANTHER" id="PTHR33695:SF1">
    <property type="entry name" value="LIPOPROTEIN SIGNAL PEPTIDASE"/>
    <property type="match status" value="1"/>
</dbReference>
<dbReference type="Pfam" id="PF01252">
    <property type="entry name" value="Peptidase_A8"/>
    <property type="match status" value="1"/>
</dbReference>
<dbReference type="PRINTS" id="PR00781">
    <property type="entry name" value="LIPOSIGPTASE"/>
</dbReference>
<dbReference type="PROSITE" id="PS00855">
    <property type="entry name" value="SPASE_II"/>
    <property type="match status" value="1"/>
</dbReference>
<comment type="function">
    <text evidence="1">This protein specifically catalyzes the removal of signal peptides from prolipoproteins.</text>
</comment>
<comment type="catalytic activity">
    <reaction evidence="1">
        <text>Release of signal peptides from bacterial membrane prolipoproteins. Hydrolyzes -Xaa-Yaa-Zaa-|-(S,diacylglyceryl)Cys-, in which Xaa is hydrophobic (preferably Leu), and Yaa (Ala or Ser) and Zaa (Gly or Ala) have small, neutral side chains.</text>
        <dbReference type="EC" id="3.4.23.36"/>
    </reaction>
</comment>
<comment type="pathway">
    <text evidence="1">Protein modification; lipoprotein biosynthesis (signal peptide cleavage).</text>
</comment>
<comment type="subcellular location">
    <subcellularLocation>
        <location evidence="1">Cell inner membrane</location>
        <topology evidence="1">Multi-pass membrane protein</topology>
    </subcellularLocation>
</comment>
<comment type="similarity">
    <text evidence="1">Belongs to the peptidase A8 family.</text>
</comment>
<comment type="sequence caution" evidence="2">
    <conflict type="erroneous initiation">
        <sequence resource="EMBL-CDS" id="AAN66230"/>
    </conflict>
</comment>